<proteinExistence type="inferred from homology"/>
<comment type="function">
    <text evidence="1">Bidirectionally degrades single-stranded DNA into large acid-insoluble oligonucleotides, which are then degraded further into small acid-soluble oligonucleotides.</text>
</comment>
<comment type="catalytic activity">
    <reaction evidence="1">
        <text>Exonucleolytic cleavage in either 5'- to 3'- or 3'- to 5'-direction to yield nucleoside 5'-phosphates.</text>
        <dbReference type="EC" id="3.1.11.6"/>
    </reaction>
</comment>
<comment type="subunit">
    <text evidence="1">Heterooligomer composed of large and small subunits.</text>
</comment>
<comment type="subcellular location">
    <subcellularLocation>
        <location evidence="1">Cytoplasm</location>
    </subcellularLocation>
</comment>
<comment type="similarity">
    <text evidence="1">Belongs to the XseA family.</text>
</comment>
<evidence type="ECO:0000255" key="1">
    <source>
        <dbReference type="HAMAP-Rule" id="MF_00378"/>
    </source>
</evidence>
<feature type="chain" id="PRO_0000303780" description="Exodeoxyribonuclease 7 large subunit">
    <location>
        <begin position="1"/>
        <end position="516"/>
    </location>
</feature>
<reference key="1">
    <citation type="journal article" date="2005" name="Infect. Immun.">
        <title>Comparative genomic analysis of Chlamydia trachomatis oculotropic and genitotropic strains.</title>
        <authorList>
            <person name="Carlson J.H."/>
            <person name="Porcella S.F."/>
            <person name="McClarty G."/>
            <person name="Caldwell H.D."/>
        </authorList>
    </citation>
    <scope>NUCLEOTIDE SEQUENCE [LARGE SCALE GENOMIC DNA]</scope>
    <source>
        <strain>ATCC VR-571B / DSM 19440 / HAR-13</strain>
    </source>
</reference>
<keyword id="KW-0963">Cytoplasm</keyword>
<keyword id="KW-0269">Exonuclease</keyword>
<keyword id="KW-0378">Hydrolase</keyword>
<keyword id="KW-0540">Nuclease</keyword>
<organism>
    <name type="scientific">Chlamydia trachomatis serovar A (strain ATCC VR-571B / DSM 19440 / HAR-13)</name>
    <dbReference type="NCBI Taxonomy" id="315277"/>
    <lineage>
        <taxon>Bacteria</taxon>
        <taxon>Pseudomonadati</taxon>
        <taxon>Chlamydiota</taxon>
        <taxon>Chlamydiia</taxon>
        <taxon>Chlamydiales</taxon>
        <taxon>Chlamydiaceae</taxon>
        <taxon>Chlamydia/Chlamydophila group</taxon>
        <taxon>Chlamydia</taxon>
    </lineage>
</organism>
<name>EX7L_CHLTA</name>
<sequence>MSITSPPIEVSVLTDSIKNLLEKNFLRVVVKGELSNVSLQTSGHLYFAIKDSKAVLNGAFFHFRSKYFDRKPKDGDYVILHGKLTVYAPRGQYQIVAYALTFSGEGNLLQQFEERKQRLAAEGYFDPKRKKPLPSGARVIGVITSPTGAVIQDILRVLSRRCHQFQVILYPVTVQGATAAQEISQAIQFFNQNSMGVHALIIARGGGSIEDLWAFNEEELVKSIVASSIPIISAVGHETDFTLCDFASDVRAPTPSAAAEIVCKSSDQYRQELQNLRRYVSSHARQFIAAKKNLLTHWQRHLASVDFYHTAQQTLDYTRAALERGIETKLEYYKQRFAQYRRWLKSDVLIRIEKHLADLNQSLMLSIKNKIYTKKTSLNQLYTSCLKNELLNLQHRTQHSRNILSQLSRRLHIAIASSQQTHQECLVRLQNELSFTIQHLLTKAKERCQAIQEQASSLNPKNVLKRGFAQLFDFNKHFVIISAESLKQSDLVRVCLQDGEAVVSVKEVWLNNDKKG</sequence>
<protein>
    <recommendedName>
        <fullName evidence="1">Exodeoxyribonuclease 7 large subunit</fullName>
        <ecNumber evidence="1">3.1.11.6</ecNumber>
    </recommendedName>
    <alternativeName>
        <fullName evidence="1">Exodeoxyribonuclease VII large subunit</fullName>
        <shortName evidence="1">Exonuclease VII large subunit</shortName>
    </alternativeName>
</protein>
<dbReference type="EC" id="3.1.11.6" evidence="1"/>
<dbReference type="EMBL" id="CP000051">
    <property type="protein sequence ID" value="AAX50591.1"/>
    <property type="molecule type" value="Genomic_DNA"/>
</dbReference>
<dbReference type="RefSeq" id="WP_009872565.1">
    <property type="nucleotide sequence ID" value="NC_007429.1"/>
</dbReference>
<dbReference type="SMR" id="Q3KM31"/>
<dbReference type="KEGG" id="cta:CTA_0356"/>
<dbReference type="HOGENOM" id="CLU_023625_3_1_0"/>
<dbReference type="Proteomes" id="UP000002532">
    <property type="component" value="Chromosome"/>
</dbReference>
<dbReference type="GO" id="GO:0005737">
    <property type="term" value="C:cytoplasm"/>
    <property type="evidence" value="ECO:0007669"/>
    <property type="project" value="UniProtKB-SubCell"/>
</dbReference>
<dbReference type="GO" id="GO:0009318">
    <property type="term" value="C:exodeoxyribonuclease VII complex"/>
    <property type="evidence" value="ECO:0007669"/>
    <property type="project" value="InterPro"/>
</dbReference>
<dbReference type="GO" id="GO:0008855">
    <property type="term" value="F:exodeoxyribonuclease VII activity"/>
    <property type="evidence" value="ECO:0007669"/>
    <property type="project" value="UniProtKB-UniRule"/>
</dbReference>
<dbReference type="GO" id="GO:0003676">
    <property type="term" value="F:nucleic acid binding"/>
    <property type="evidence" value="ECO:0007669"/>
    <property type="project" value="InterPro"/>
</dbReference>
<dbReference type="GO" id="GO:0006308">
    <property type="term" value="P:DNA catabolic process"/>
    <property type="evidence" value="ECO:0007669"/>
    <property type="project" value="UniProtKB-UniRule"/>
</dbReference>
<dbReference type="CDD" id="cd04489">
    <property type="entry name" value="ExoVII_LU_OBF"/>
    <property type="match status" value="1"/>
</dbReference>
<dbReference type="HAMAP" id="MF_00378">
    <property type="entry name" value="Exonuc_7_L"/>
    <property type="match status" value="1"/>
</dbReference>
<dbReference type="InterPro" id="IPR003753">
    <property type="entry name" value="Exonuc_VII_L"/>
</dbReference>
<dbReference type="InterPro" id="IPR020579">
    <property type="entry name" value="Exonuc_VII_lsu_C"/>
</dbReference>
<dbReference type="InterPro" id="IPR025824">
    <property type="entry name" value="OB-fold_nuc-bd_dom"/>
</dbReference>
<dbReference type="NCBIfam" id="TIGR00237">
    <property type="entry name" value="xseA"/>
    <property type="match status" value="1"/>
</dbReference>
<dbReference type="PANTHER" id="PTHR30008">
    <property type="entry name" value="EXODEOXYRIBONUCLEASE 7 LARGE SUBUNIT"/>
    <property type="match status" value="1"/>
</dbReference>
<dbReference type="PANTHER" id="PTHR30008:SF0">
    <property type="entry name" value="EXODEOXYRIBONUCLEASE 7 LARGE SUBUNIT"/>
    <property type="match status" value="1"/>
</dbReference>
<dbReference type="Pfam" id="PF02601">
    <property type="entry name" value="Exonuc_VII_L"/>
    <property type="match status" value="2"/>
</dbReference>
<dbReference type="Pfam" id="PF13742">
    <property type="entry name" value="tRNA_anti_2"/>
    <property type="match status" value="1"/>
</dbReference>
<accession>Q3KM31</accession>
<gene>
    <name evidence="1" type="primary">xseA</name>
    <name type="ordered locus">CTA_0356</name>
</gene>